<feature type="chain" id="PRO_0000216650" description="Potassium/proton antiporter CemA">
    <location>
        <begin position="1"/>
        <end position="229"/>
    </location>
</feature>
<feature type="transmembrane region" description="Helical" evidence="1">
    <location>
        <begin position="7"/>
        <end position="27"/>
    </location>
</feature>
<feature type="transmembrane region" description="Helical" evidence="1">
    <location>
        <begin position="106"/>
        <end position="126"/>
    </location>
</feature>
<feature type="transmembrane region" description="Helical" evidence="1">
    <location>
        <begin position="189"/>
        <end position="209"/>
    </location>
</feature>
<dbReference type="EMBL" id="AJ627251">
    <property type="protein sequence ID" value="CAF28605.1"/>
    <property type="molecule type" value="Genomic_DNA"/>
</dbReference>
<dbReference type="RefSeq" id="YP_053167.1">
    <property type="nucleotide sequence ID" value="NC_006050.1"/>
</dbReference>
<dbReference type="SMR" id="Q6EW41"/>
<dbReference type="GeneID" id="2896174"/>
<dbReference type="GO" id="GO:0009706">
    <property type="term" value="C:chloroplast inner membrane"/>
    <property type="evidence" value="ECO:0007669"/>
    <property type="project" value="UniProtKB-SubCell"/>
</dbReference>
<dbReference type="GO" id="GO:0015297">
    <property type="term" value="F:antiporter activity"/>
    <property type="evidence" value="ECO:0007669"/>
    <property type="project" value="UniProtKB-KW"/>
</dbReference>
<dbReference type="GO" id="GO:0015078">
    <property type="term" value="F:proton transmembrane transporter activity"/>
    <property type="evidence" value="ECO:0007669"/>
    <property type="project" value="UniProtKB-UniRule"/>
</dbReference>
<dbReference type="GO" id="GO:0006813">
    <property type="term" value="P:potassium ion transport"/>
    <property type="evidence" value="ECO:0007669"/>
    <property type="project" value="UniProtKB-UniRule"/>
</dbReference>
<dbReference type="HAMAP" id="MF_01308">
    <property type="entry name" value="CemA_PxcA"/>
    <property type="match status" value="1"/>
</dbReference>
<dbReference type="InterPro" id="IPR004282">
    <property type="entry name" value="CemA"/>
</dbReference>
<dbReference type="PANTHER" id="PTHR33650:SF2">
    <property type="entry name" value="CHLOROPLAST ENVELOPE MEMBRANE PROTEIN"/>
    <property type="match status" value="1"/>
</dbReference>
<dbReference type="PANTHER" id="PTHR33650">
    <property type="entry name" value="CHLOROPLAST ENVELOPE MEMBRANE PROTEIN-RELATED"/>
    <property type="match status" value="1"/>
</dbReference>
<dbReference type="Pfam" id="PF03040">
    <property type="entry name" value="CemA"/>
    <property type="match status" value="1"/>
</dbReference>
<reference key="1">
    <citation type="journal article" date="2004" name="Mol. Biol. Evol.">
        <title>The chloroplast genome of Nymphaea alba: whole-genome analyses and the problem of identifying the most basal angiosperm.</title>
        <authorList>
            <person name="Goremykin V.V."/>
            <person name="Hirsch-Ernst K.I."/>
            <person name="Woelfl S."/>
            <person name="Hellwig F.H."/>
        </authorList>
    </citation>
    <scope>NUCLEOTIDE SEQUENCE [LARGE SCALE GENOMIC DNA]</scope>
</reference>
<sequence>MTKKKALNPLPYLASIVFLPWGISLSFNKSMEPWVTNWWNTSQSETFLNDIQEKNILEGFIKLEELFLLDEMIKEYPETHIQKLRIGIHKETIQLVRMHNQDHIHIILHFSTNITCFAILSAYSILGNEELITLNSWVQEFLYNLSDTIKAFSILLLTDLCIGFHSPHAWELMIGSFYKDFGFVQNEKIISGLVSTFPVILDTILKYWIFHYLNRVSPSLVVIYHSLNE</sequence>
<evidence type="ECO:0000255" key="1">
    <source>
        <dbReference type="HAMAP-Rule" id="MF_01308"/>
    </source>
</evidence>
<evidence type="ECO:0000305" key="2"/>
<gene>
    <name evidence="1" type="primary">cemA</name>
</gene>
<name>CEMA_NYMAL</name>
<proteinExistence type="inferred from homology"/>
<protein>
    <recommendedName>
        <fullName evidence="1">Potassium/proton antiporter CemA</fullName>
    </recommendedName>
    <alternativeName>
        <fullName evidence="1">Chloroplast envelope membrane protein A</fullName>
        <shortName evidence="1">CemA</shortName>
    </alternativeName>
</protein>
<keyword id="KW-0050">Antiport</keyword>
<keyword id="KW-0150">Chloroplast</keyword>
<keyword id="KW-0375">Hydrogen ion transport</keyword>
<keyword id="KW-0406">Ion transport</keyword>
<keyword id="KW-0472">Membrane</keyword>
<keyword id="KW-0934">Plastid</keyword>
<keyword id="KW-1001">Plastid inner membrane</keyword>
<keyword id="KW-0630">Potassium</keyword>
<keyword id="KW-0633">Potassium transport</keyword>
<keyword id="KW-0812">Transmembrane</keyword>
<keyword id="KW-1133">Transmembrane helix</keyword>
<keyword id="KW-0813">Transport</keyword>
<geneLocation type="chloroplast"/>
<comment type="function">
    <text evidence="1">Contributes to K(+)/H(+) antiport activity by supporting proton efflux to control proton extrusion and homeostasis in chloroplasts in a light-dependent manner to modulate photosynthesis. Prevents excessive induction of non-photochemical quenching (NPQ) under continuous-light conditions. Indirectly promotes efficient inorganic carbon uptake into chloroplasts.</text>
</comment>
<comment type="catalytic activity">
    <reaction evidence="1">
        <text>K(+)(in) + H(+)(out) = K(+)(out) + H(+)(in)</text>
        <dbReference type="Rhea" id="RHEA:29467"/>
        <dbReference type="ChEBI" id="CHEBI:15378"/>
        <dbReference type="ChEBI" id="CHEBI:29103"/>
    </reaction>
</comment>
<comment type="subcellular location">
    <subcellularLocation>
        <location evidence="1">Plastid</location>
        <location evidence="1">Chloroplast inner membrane</location>
        <topology evidence="1">Multi-pass membrane protein</topology>
    </subcellularLocation>
</comment>
<comment type="similarity">
    <text evidence="1 2">Belongs to the CemA family.</text>
</comment>
<accession>Q6EW41</accession>
<organism>
    <name type="scientific">Nymphaea alba</name>
    <name type="common">White water-lily</name>
    <name type="synonym">Castalia alba</name>
    <dbReference type="NCBI Taxonomy" id="34301"/>
    <lineage>
        <taxon>Eukaryota</taxon>
        <taxon>Viridiplantae</taxon>
        <taxon>Streptophyta</taxon>
        <taxon>Embryophyta</taxon>
        <taxon>Tracheophyta</taxon>
        <taxon>Spermatophyta</taxon>
        <taxon>Magnoliopsida</taxon>
        <taxon>Nymphaeales</taxon>
        <taxon>Nymphaeaceae</taxon>
        <taxon>Nymphaea</taxon>
    </lineage>
</organism>